<keyword id="KW-0749">Sporulation</keyword>
<dbReference type="EMBL" id="CP000764">
    <property type="protein sequence ID" value="ABS21718.1"/>
    <property type="molecule type" value="Genomic_DNA"/>
</dbReference>
<dbReference type="RefSeq" id="WP_012093891.1">
    <property type="nucleotide sequence ID" value="NC_009674.1"/>
</dbReference>
<dbReference type="SMR" id="A7GNL0"/>
<dbReference type="STRING" id="315749.Bcer98_1397"/>
<dbReference type="GeneID" id="33896739"/>
<dbReference type="KEGG" id="bcy:Bcer98_1397"/>
<dbReference type="eggNOG" id="ENOG5033AUF">
    <property type="taxonomic scope" value="Bacteria"/>
</dbReference>
<dbReference type="HOGENOM" id="CLU_191960_2_1_9"/>
<dbReference type="OrthoDB" id="1683648at2"/>
<dbReference type="Proteomes" id="UP000002300">
    <property type="component" value="Chromosome"/>
</dbReference>
<dbReference type="GO" id="GO:0042601">
    <property type="term" value="C:endospore-forming forespore"/>
    <property type="evidence" value="ECO:0007669"/>
    <property type="project" value="InterPro"/>
</dbReference>
<dbReference type="GO" id="GO:0030436">
    <property type="term" value="P:asexual sporulation"/>
    <property type="evidence" value="ECO:0007669"/>
    <property type="project" value="UniProtKB-UniRule"/>
</dbReference>
<dbReference type="GO" id="GO:0030435">
    <property type="term" value="P:sporulation resulting in formation of a cellular spore"/>
    <property type="evidence" value="ECO:0007669"/>
    <property type="project" value="UniProtKB-KW"/>
</dbReference>
<dbReference type="HAMAP" id="MF_00667">
    <property type="entry name" value="SspH"/>
    <property type="match status" value="1"/>
</dbReference>
<dbReference type="InterPro" id="IPR012610">
    <property type="entry name" value="SASP_SspH"/>
</dbReference>
<dbReference type="NCBIfam" id="TIGR02861">
    <property type="entry name" value="SASP_H"/>
    <property type="match status" value="1"/>
</dbReference>
<dbReference type="Pfam" id="PF08141">
    <property type="entry name" value="SspH"/>
    <property type="match status" value="1"/>
</dbReference>
<proteinExistence type="inferred from homology"/>
<reference key="1">
    <citation type="journal article" date="2008" name="Chem. Biol. Interact.">
        <title>Extending the Bacillus cereus group genomics to putative food-borne pathogens of different toxicity.</title>
        <authorList>
            <person name="Lapidus A."/>
            <person name="Goltsman E."/>
            <person name="Auger S."/>
            <person name="Galleron N."/>
            <person name="Segurens B."/>
            <person name="Dossat C."/>
            <person name="Land M.L."/>
            <person name="Broussolle V."/>
            <person name="Brillard J."/>
            <person name="Guinebretiere M.-H."/>
            <person name="Sanchis V."/>
            <person name="Nguen-the C."/>
            <person name="Lereclus D."/>
            <person name="Richardson P."/>
            <person name="Wincker P."/>
            <person name="Weissenbach J."/>
            <person name="Ehrlich S.D."/>
            <person name="Sorokin A."/>
        </authorList>
    </citation>
    <scope>NUCLEOTIDE SEQUENCE [LARGE SCALE GENOMIC DNA]</scope>
    <source>
        <strain>DSM 22905 / CIP 110041 / 391-98 / NVH 391-98</strain>
    </source>
</reference>
<gene>
    <name evidence="1" type="primary">sspH2</name>
    <name type="ordered locus">Bcer98_1397</name>
</gene>
<organism>
    <name type="scientific">Bacillus cytotoxicus (strain DSM 22905 / CIP 110041 / 391-98 / NVH 391-98)</name>
    <dbReference type="NCBI Taxonomy" id="315749"/>
    <lineage>
        <taxon>Bacteria</taxon>
        <taxon>Bacillati</taxon>
        <taxon>Bacillota</taxon>
        <taxon>Bacilli</taxon>
        <taxon>Bacillales</taxon>
        <taxon>Bacillaceae</taxon>
        <taxon>Bacillus</taxon>
        <taxon>Bacillus cereus group</taxon>
    </lineage>
</organism>
<feature type="chain" id="PRO_0000329124" description="Small, acid-soluble spore protein H 2">
    <location>
        <begin position="1"/>
        <end position="59"/>
    </location>
</feature>
<accession>A7GNL0</accession>
<name>SSPH2_BACCN</name>
<comment type="subcellular location">
    <subcellularLocation>
        <location evidence="1">Spore core</location>
    </subcellularLocation>
</comment>
<comment type="induction">
    <text evidence="1">Expressed only in the forespore compartment of sporulating cells.</text>
</comment>
<comment type="similarity">
    <text evidence="1">Belongs to the SspH family.</text>
</comment>
<sequence length="59" mass="6674">MNVQRAKEISESAEQANVSFQGMPVMIQHVDENSETARIYDAANPERELTVPVKSLEER</sequence>
<protein>
    <recommendedName>
        <fullName evidence="1">Small, acid-soluble spore protein H 2</fullName>
        <shortName evidence="1">SASP H 2</shortName>
    </recommendedName>
</protein>
<evidence type="ECO:0000255" key="1">
    <source>
        <dbReference type="HAMAP-Rule" id="MF_00667"/>
    </source>
</evidence>